<accession>Q3SLY3</accession>
<keyword id="KW-0378">Hydrolase</keyword>
<keyword id="KW-1185">Reference proteome</keyword>
<protein>
    <recommendedName>
        <fullName evidence="1">Deoxyguanosinetriphosphate triphosphohydrolase-like protein</fullName>
    </recommendedName>
</protein>
<feature type="chain" id="PRO_1000066443" description="Deoxyguanosinetriphosphate triphosphohydrolase-like protein">
    <location>
        <begin position="1"/>
        <end position="376"/>
    </location>
</feature>
<feature type="domain" description="HD" evidence="2">
    <location>
        <begin position="65"/>
        <end position="196"/>
    </location>
</feature>
<feature type="region of interest" description="Disordered" evidence="3">
    <location>
        <begin position="1"/>
        <end position="32"/>
    </location>
</feature>
<reference key="1">
    <citation type="journal article" date="2006" name="J. Bacteriol.">
        <title>The genome sequence of the obligately chemolithoautotrophic, facultatively anaerobic bacterium Thiobacillus denitrificans.</title>
        <authorList>
            <person name="Beller H.R."/>
            <person name="Chain P.S."/>
            <person name="Letain T.E."/>
            <person name="Chakicherla A."/>
            <person name="Larimer F.W."/>
            <person name="Richardson P.M."/>
            <person name="Coleman M.A."/>
            <person name="Wood A.P."/>
            <person name="Kelly D.P."/>
        </authorList>
    </citation>
    <scope>NUCLEOTIDE SEQUENCE [LARGE SCALE GENOMIC DNA]</scope>
    <source>
        <strain>ATCC 25259 / T1</strain>
    </source>
</reference>
<sequence length="376" mass="42726">MEPSFAPYAAHSSQTRGRVHREAPAAPRSEFQRDRDRIIHSTAFRRLEYKTQVFVNHEGDLFRTRLTHSIEVAQIGRTIARLLNLNEDLVEAVALAHDLGHTPFGHAGQDALNACMREHGGFEHNLQSLRVVDLLEERYAEFDGLNLTFEAREGILKHCALSNAEKLGEVGRRFIDKKQPSLEAQVANLADEIAYNNHDVDDGLRSGLITLEQLSEVTIFGRHLAEVRRKHPTLQGRRVVTETVRRIINALILDLVDTTRTNVVNSGVETLDDVRNAPPLAAFSPAILEQHRELKRFLLHHLYRHYKVARMSTKAGRIISDLYAAFTGDARLLPPEHQARESLEGTRAVADYIAGMTDRYAMREHRRIYAVEEIYD</sequence>
<proteinExistence type="inferred from homology"/>
<gene>
    <name type="ordered locus">Tbd_0316</name>
</gene>
<organism>
    <name type="scientific">Thiobacillus denitrificans (strain ATCC 25259 / T1)</name>
    <dbReference type="NCBI Taxonomy" id="292415"/>
    <lineage>
        <taxon>Bacteria</taxon>
        <taxon>Pseudomonadati</taxon>
        <taxon>Pseudomonadota</taxon>
        <taxon>Betaproteobacteria</taxon>
        <taxon>Nitrosomonadales</taxon>
        <taxon>Thiobacillaceae</taxon>
        <taxon>Thiobacillus</taxon>
    </lineage>
</organism>
<name>DGTL1_THIDA</name>
<evidence type="ECO:0000255" key="1">
    <source>
        <dbReference type="HAMAP-Rule" id="MF_01212"/>
    </source>
</evidence>
<evidence type="ECO:0000255" key="2">
    <source>
        <dbReference type="PROSITE-ProRule" id="PRU01175"/>
    </source>
</evidence>
<evidence type="ECO:0000256" key="3">
    <source>
        <dbReference type="SAM" id="MobiDB-lite"/>
    </source>
</evidence>
<dbReference type="EMBL" id="CP000116">
    <property type="protein sequence ID" value="AAZ96269.1"/>
    <property type="molecule type" value="Genomic_DNA"/>
</dbReference>
<dbReference type="RefSeq" id="WP_011310829.1">
    <property type="nucleotide sequence ID" value="NC_007404.1"/>
</dbReference>
<dbReference type="SMR" id="Q3SLY3"/>
<dbReference type="STRING" id="292415.Tbd_0316"/>
<dbReference type="KEGG" id="tbd:Tbd_0316"/>
<dbReference type="eggNOG" id="COG0232">
    <property type="taxonomic scope" value="Bacteria"/>
</dbReference>
<dbReference type="HOGENOM" id="CLU_028163_1_0_4"/>
<dbReference type="OrthoDB" id="9803619at2"/>
<dbReference type="Proteomes" id="UP000008291">
    <property type="component" value="Chromosome"/>
</dbReference>
<dbReference type="GO" id="GO:0008832">
    <property type="term" value="F:dGTPase activity"/>
    <property type="evidence" value="ECO:0007669"/>
    <property type="project" value="TreeGrafter"/>
</dbReference>
<dbReference type="GO" id="GO:0006203">
    <property type="term" value="P:dGTP catabolic process"/>
    <property type="evidence" value="ECO:0007669"/>
    <property type="project" value="TreeGrafter"/>
</dbReference>
<dbReference type="CDD" id="cd00077">
    <property type="entry name" value="HDc"/>
    <property type="match status" value="1"/>
</dbReference>
<dbReference type="FunFam" id="1.10.3210.10:FF:000024">
    <property type="entry name" value="Deoxyguanosinetriphosphate triphosphohydrolase-like protein"/>
    <property type="match status" value="1"/>
</dbReference>
<dbReference type="Gene3D" id="1.10.3210.10">
    <property type="entry name" value="Hypothetical protein af1432"/>
    <property type="match status" value="1"/>
</dbReference>
<dbReference type="HAMAP" id="MF_01212">
    <property type="entry name" value="dGTPase_type2"/>
    <property type="match status" value="1"/>
</dbReference>
<dbReference type="InterPro" id="IPR006261">
    <property type="entry name" value="dGTPase"/>
</dbReference>
<dbReference type="InterPro" id="IPR050135">
    <property type="entry name" value="dGTPase-like"/>
</dbReference>
<dbReference type="InterPro" id="IPR023023">
    <property type="entry name" value="dNTPase_2"/>
</dbReference>
<dbReference type="InterPro" id="IPR003607">
    <property type="entry name" value="HD/PDEase_dom"/>
</dbReference>
<dbReference type="InterPro" id="IPR006674">
    <property type="entry name" value="HD_domain"/>
</dbReference>
<dbReference type="InterPro" id="IPR026875">
    <property type="entry name" value="PHydrolase_assoc_dom"/>
</dbReference>
<dbReference type="NCBIfam" id="TIGR01353">
    <property type="entry name" value="dGTP_triPase"/>
    <property type="match status" value="1"/>
</dbReference>
<dbReference type="NCBIfam" id="NF002326">
    <property type="entry name" value="PRK01286.1-1"/>
    <property type="match status" value="1"/>
</dbReference>
<dbReference type="PANTHER" id="PTHR11373:SF43">
    <property type="entry name" value="DEOXYGUANOSINETRIPHOSPHATE TRIPHOSPHOHYDROLASE-LIKE PROTEIN"/>
    <property type="match status" value="1"/>
</dbReference>
<dbReference type="PANTHER" id="PTHR11373">
    <property type="entry name" value="DEOXYNUCLEOSIDE TRIPHOSPHATE TRIPHOSPHOHYDROLASE"/>
    <property type="match status" value="1"/>
</dbReference>
<dbReference type="Pfam" id="PF01966">
    <property type="entry name" value="HD"/>
    <property type="match status" value="1"/>
</dbReference>
<dbReference type="Pfam" id="PF13286">
    <property type="entry name" value="HD_assoc"/>
    <property type="match status" value="1"/>
</dbReference>
<dbReference type="SMART" id="SM00471">
    <property type="entry name" value="HDc"/>
    <property type="match status" value="1"/>
</dbReference>
<dbReference type="SUPFAM" id="SSF109604">
    <property type="entry name" value="HD-domain/PDEase-like"/>
    <property type="match status" value="1"/>
</dbReference>
<dbReference type="PROSITE" id="PS51831">
    <property type="entry name" value="HD"/>
    <property type="match status" value="1"/>
</dbReference>
<comment type="similarity">
    <text evidence="1">Belongs to the dGTPase family. Type 2 subfamily.</text>
</comment>